<comment type="function">
    <text evidence="1">Catalyzes the transfer of a dimethylallyl group onto the adenine at position 37 in tRNAs that read codons beginning with uridine, leading to the formation of N6-(dimethylallyl)adenosine (i(6)A).</text>
</comment>
<comment type="catalytic activity">
    <reaction evidence="1">
        <text>adenosine(37) in tRNA + dimethylallyl diphosphate = N(6)-dimethylallyladenosine(37) in tRNA + diphosphate</text>
        <dbReference type="Rhea" id="RHEA:26482"/>
        <dbReference type="Rhea" id="RHEA-COMP:10162"/>
        <dbReference type="Rhea" id="RHEA-COMP:10375"/>
        <dbReference type="ChEBI" id="CHEBI:33019"/>
        <dbReference type="ChEBI" id="CHEBI:57623"/>
        <dbReference type="ChEBI" id="CHEBI:74411"/>
        <dbReference type="ChEBI" id="CHEBI:74415"/>
        <dbReference type="EC" id="2.5.1.75"/>
    </reaction>
</comment>
<comment type="cofactor">
    <cofactor evidence="1">
        <name>Mg(2+)</name>
        <dbReference type="ChEBI" id="CHEBI:18420"/>
    </cofactor>
</comment>
<comment type="subunit">
    <text evidence="1">Monomer.</text>
</comment>
<comment type="similarity">
    <text evidence="1">Belongs to the IPP transferase family.</text>
</comment>
<keyword id="KW-0067">ATP-binding</keyword>
<keyword id="KW-0460">Magnesium</keyword>
<keyword id="KW-0547">Nucleotide-binding</keyword>
<keyword id="KW-0808">Transferase</keyword>
<keyword id="KW-0819">tRNA processing</keyword>
<name>MIAA_TROW8</name>
<proteinExistence type="inferred from homology"/>
<gene>
    <name evidence="1" type="primary">miaA</name>
    <name type="ordered locus">TW626</name>
</gene>
<organism>
    <name type="scientific">Tropheryma whipplei (strain TW08/27)</name>
    <name type="common">Whipple's bacillus</name>
    <dbReference type="NCBI Taxonomy" id="218496"/>
    <lineage>
        <taxon>Bacteria</taxon>
        <taxon>Bacillati</taxon>
        <taxon>Actinomycetota</taxon>
        <taxon>Actinomycetes</taxon>
        <taxon>Micrococcales</taxon>
        <taxon>Tropherymataceae</taxon>
        <taxon>Tropheryma</taxon>
    </lineage>
</organism>
<feature type="chain" id="PRO_0000377362" description="tRNA dimethylallyltransferase">
    <location>
        <begin position="1"/>
        <end position="286"/>
    </location>
</feature>
<feature type="region of interest" description="Interaction with substrate tRNA" evidence="1">
    <location>
        <begin position="18"/>
        <end position="21"/>
    </location>
</feature>
<feature type="site" description="Interaction with substrate tRNA" evidence="1">
    <location>
        <position position="84"/>
    </location>
</feature>
<feature type="site" description="Interaction with substrate tRNA" evidence="1">
    <location>
        <position position="105"/>
    </location>
</feature>
<accession>Q820Y7</accession>
<dbReference type="EC" id="2.5.1.75" evidence="1"/>
<dbReference type="EMBL" id="BX251412">
    <property type="protein sequence ID" value="CAD67290.1"/>
    <property type="molecule type" value="Genomic_DNA"/>
</dbReference>
<dbReference type="SMR" id="Q820Y7"/>
<dbReference type="KEGG" id="tws:TW626"/>
<dbReference type="HOGENOM" id="CLU_032616_0_1_11"/>
<dbReference type="GO" id="GO:0005524">
    <property type="term" value="F:ATP binding"/>
    <property type="evidence" value="ECO:0007669"/>
    <property type="project" value="UniProtKB-UniRule"/>
</dbReference>
<dbReference type="GO" id="GO:0052381">
    <property type="term" value="F:tRNA dimethylallyltransferase activity"/>
    <property type="evidence" value="ECO:0007669"/>
    <property type="project" value="UniProtKB-UniRule"/>
</dbReference>
<dbReference type="GO" id="GO:0006400">
    <property type="term" value="P:tRNA modification"/>
    <property type="evidence" value="ECO:0007669"/>
    <property type="project" value="TreeGrafter"/>
</dbReference>
<dbReference type="Gene3D" id="1.10.20.140">
    <property type="match status" value="1"/>
</dbReference>
<dbReference type="Gene3D" id="3.40.50.300">
    <property type="entry name" value="P-loop containing nucleotide triphosphate hydrolases"/>
    <property type="match status" value="1"/>
</dbReference>
<dbReference type="HAMAP" id="MF_00185">
    <property type="entry name" value="IPP_trans"/>
    <property type="match status" value="1"/>
</dbReference>
<dbReference type="InterPro" id="IPR039657">
    <property type="entry name" value="Dimethylallyltransferase"/>
</dbReference>
<dbReference type="InterPro" id="IPR018022">
    <property type="entry name" value="IPT"/>
</dbReference>
<dbReference type="InterPro" id="IPR027417">
    <property type="entry name" value="P-loop_NTPase"/>
</dbReference>
<dbReference type="NCBIfam" id="TIGR00174">
    <property type="entry name" value="miaA"/>
    <property type="match status" value="1"/>
</dbReference>
<dbReference type="PANTHER" id="PTHR11088">
    <property type="entry name" value="TRNA DIMETHYLALLYLTRANSFERASE"/>
    <property type="match status" value="1"/>
</dbReference>
<dbReference type="PANTHER" id="PTHR11088:SF60">
    <property type="entry name" value="TRNA DIMETHYLALLYLTRANSFERASE"/>
    <property type="match status" value="1"/>
</dbReference>
<dbReference type="Pfam" id="PF01715">
    <property type="entry name" value="IPPT"/>
    <property type="match status" value="1"/>
</dbReference>
<dbReference type="SUPFAM" id="SSF52540">
    <property type="entry name" value="P-loop containing nucleoside triphosphate hydrolases"/>
    <property type="match status" value="1"/>
</dbReference>
<evidence type="ECO:0000255" key="1">
    <source>
        <dbReference type="HAMAP-Rule" id="MF_00185"/>
    </source>
</evidence>
<reference key="1">
    <citation type="journal article" date="2003" name="Lancet">
        <title>Sequencing and analysis of the genome of the Whipple's disease bacterium Tropheryma whipplei.</title>
        <authorList>
            <person name="Bentley S.D."/>
            <person name="Maiwald M."/>
            <person name="Murphy L.D."/>
            <person name="Pallen M.J."/>
            <person name="Yeats C.A."/>
            <person name="Dover L.G."/>
            <person name="Norbertczak H.T."/>
            <person name="Besra G.S."/>
            <person name="Quail M.A."/>
            <person name="Harris D.E."/>
            <person name="von Herbay A."/>
            <person name="Goble A."/>
            <person name="Rutter S."/>
            <person name="Squares R."/>
            <person name="Squares S."/>
            <person name="Barrell B.G."/>
            <person name="Parkhill J."/>
            <person name="Relman D.A."/>
        </authorList>
    </citation>
    <scope>NUCLEOTIDE SEQUENCE [LARGE SCALE GENOMIC DNA]</scope>
    <source>
        <strain>TW08/27</strain>
    </source>
</reference>
<protein>
    <recommendedName>
        <fullName evidence="1">tRNA dimethylallyltransferase</fullName>
        <ecNumber evidence="1">2.5.1.75</ecNumber>
    </recommendedName>
    <alternativeName>
        <fullName evidence="1">Dimethylallyl diphosphate:tRNA dimethylallyltransferase</fullName>
        <shortName evidence="1">DMAPP:tRNA dimethylallyltransferase</shortName>
        <shortName evidence="1">DMATase</shortName>
    </alternativeName>
    <alternativeName>
        <fullName evidence="1">Isopentenyl-diphosphate:tRNA isopentenyltransferase</fullName>
        <shortName evidence="1">IPP transferase</shortName>
        <shortName evidence="1">IPPT</shortName>
        <shortName evidence="1">IPTase</shortName>
    </alternativeName>
</protein>
<sequence length="286" mass="32080">MLSLDAARDFNGHIVNADSMQLYRDMDIGTAKLSHSARQGIPHHQIDVIDPSSEASVARYKLSAQTCIKHIHALNSIPFLVGGSGLYVSSVVHNLQFPPTDGRVRKLLEDEADKSGIGVLHDRLLKLHPGFTVSRGNRRRIIRALEVAYITGRSPNPVLPLQNRANNFIVINLICDKGTLDIRLQKRVESFYDNGLIDEVRLLQEKYVLGRTAAKAIGYKQAIMYLAGEISCADAKDSTLQETIRLANKQIKWFRRYSGQHIVDTTDMSVAYEQIRSILNKSFRIS</sequence>